<evidence type="ECO:0000255" key="1">
    <source>
        <dbReference type="PROSITE-ProRule" id="PRU00038"/>
    </source>
</evidence>
<evidence type="ECO:0000269" key="2">
    <source>
    </source>
</evidence>
<evidence type="ECO:0000269" key="3">
    <source>
    </source>
</evidence>
<evidence type="ECO:0000269" key="4">
    <source>
    </source>
</evidence>
<evidence type="ECO:0000269" key="5">
    <source>
    </source>
</evidence>
<evidence type="ECO:0000269" key="6">
    <source>
    </source>
</evidence>
<evidence type="ECO:0000269" key="7">
    <source>
    </source>
</evidence>
<evidence type="ECO:0000269" key="8">
    <source ref="7"/>
</evidence>
<evidence type="ECO:0000303" key="9">
    <source>
    </source>
</evidence>
<evidence type="ECO:0000303" key="10">
    <source>
    </source>
</evidence>
<evidence type="ECO:0000303" key="11">
    <source>
    </source>
</evidence>
<evidence type="ECO:0000303" key="12">
    <source>
    </source>
</evidence>
<evidence type="ECO:0000305" key="13"/>
<evidence type="ECO:0007744" key="14">
    <source>
        <dbReference type="PDB" id="1NPL"/>
    </source>
</evidence>
<evidence type="ECO:0007744" key="15">
    <source>
        <dbReference type="PDB" id="3DZW"/>
    </source>
</evidence>
<evidence type="ECO:0007829" key="16">
    <source>
        <dbReference type="PDB" id="3DZW"/>
    </source>
</evidence>
<keyword id="KW-0002">3D-structure</keyword>
<keyword id="KW-0930">Antiviral protein</keyword>
<keyword id="KW-1015">Disulfide bond</keyword>
<keyword id="KW-0430">Lectin</keyword>
<keyword id="KW-0465">Mannose-binding</keyword>
<keyword id="KW-0611">Plant defense</keyword>
<keyword id="KW-0964">Secreted</keyword>
<proteinExistence type="evidence at protein level"/>
<comment type="function">
    <text evidence="2 3 4 5 6 7">D-mannose-binding lectin which binds alpha-D-linked mannose (PubMed:10388566, PubMed:14505313, PubMed:1645507, PubMed:1874921, PubMed:2350177). Displays a high affinity for alpha-(1-6)-mannose oligomers (PubMed:1645507, PubMed:2350177). Able to interact with both terminal and internal alpha-D-mannosyl residues (PubMed:2350177). Displays antiviral activity and therefore may contribute to defense against infections (PubMed:1645507, PubMed:7481093).</text>
</comment>
<comment type="activity regulation">
    <text evidence="6">Strongly inhibited by alpha-1,6-linked mannotriose (PubMed:2350177). Inhibited by various oligosaccharides of P.pastoris mannan including, Man(alpha-l,6)Man-alpha-O-Me, Man(alpha-l,2)Man, Man(alpha-l,3)Man-alpha-O-Me, Man(alpha-l,2)Man, alpha-1,2-linked mannotriose, and Man(alpha-1,6)Glc, in order of decreasing potency (PubMed:2350177). Weakly inhibited by elsinotetraose (PubMed:2350177). Not inhibited by maltose or nigerose (PubMed:2350177).</text>
</comment>
<comment type="subunit">
    <text evidence="2">Homotetramer; antiparallel.</text>
</comment>
<comment type="subcellular location">
    <subcellularLocation>
        <location evidence="2">Secreted</location>
    </subcellularLocation>
</comment>
<comment type="tissue specificity">
    <text evidence="2 6">Detected in bulbs (at protein level).</text>
</comment>
<comment type="biotechnology">
    <text evidence="3 5">A two enzyme-linked immunosorbent assay (ELISA) (with NPL bound to the solid phase and a Galanthus nivalis lectin (GNL) as detector) can be used for the quantitation of human immunodeficiency virus type 1 (HIV-1) coded glycoprotein (gpl20), and possibly the quantitation of free gpl20 in medium/sera, and screening for compounds and antibodies which interact with gpl20 (PubMed:1874921). When labeled with fluorescein isothiocyanate (FITC), can be used for the detection of very early stages of apoptosis, especially UV-B-induced apoptosis (PubMed:14505313).</text>
</comment>
<comment type="miscellaneous">
    <text evidence="4 7">Binds to the mannose portion of the glycoprotein (gp) 120 of HIV-1, and inhibits the attachment of HIV and rabies viruses to susceptible cells (PubMed:1645507, PubMed:7481093). Has a significant inhibitory effect against various viruses including HIV-1, HIV-2 (IC(50)=0.6 ug/ml), and SIV (IC(50)=0.5 ug/ml) in MT-4 cells (PubMed:1645507). Also inhibits human CMV replication in HEL cells (IC(50)=1.2-1.6 ug/ml) and inhibits syncytium formation between HUT-78/HIV-1 and MOLT-4 cells (IC(50)=3.3 ug/ml), and HUT-78/HIV-2 and MOLT-4 cells (IC(50)=4 ug/ml) (PubMed:1645507). Also displays antiviral activities against herpes simplex virus type 1 (MIC=11 ug/ml), the rabies virus (MIC=8.2 ug/ml) and the rubella virus (MIC=2.9 ug/ml) (PubMed:7481093).</text>
</comment>
<protein>
    <recommendedName>
        <fullName evidence="9">Mannose-specific lectin</fullName>
    </recommendedName>
    <alternativeName>
        <fullName evidence="11">Agglutinin</fullName>
    </alternativeName>
    <alternativeName>
        <fullName evidence="12">NPA</fullName>
    </alternativeName>
    <alternativeName>
        <fullName evidence="11">NPL</fullName>
    </alternativeName>
    <alternativeName>
        <fullName evidence="9">NPL7</fullName>
    </alternativeName>
    <alternativeName>
        <fullName evidence="10">NPn</fullName>
    </alternativeName>
</protein>
<sequence length="109" mass="12200">DNILYSGETLSPGEFLNNGRYVFIMQEDCNLVLYDVDKPIWATNTGGLDRRCHLSMQSDGNLVVYSPRNNPIWASNTGGENGNYVCVLQKDRNVVIYGTARWATGTNIH</sequence>
<feature type="chain" id="PRO_0000456716" description="Mannose-specific lectin">
    <location>
        <begin position="1"/>
        <end position="109"/>
    </location>
</feature>
<feature type="domain" description="Bulb-type lectin" evidence="1">
    <location>
        <begin position="25"/>
        <end position="109"/>
    </location>
</feature>
<feature type="binding site" evidence="14 15">
    <location>
        <position position="26"/>
    </location>
    <ligand>
        <name>alpha-D-mannopyranose</name>
        <dbReference type="ChEBI" id="CHEBI:28729"/>
    </ligand>
</feature>
<feature type="binding site" evidence="14 15">
    <location>
        <position position="28"/>
    </location>
    <ligand>
        <name>alpha-D-mannopyranose</name>
        <dbReference type="ChEBI" id="CHEBI:28729"/>
    </ligand>
</feature>
<feature type="binding site" evidence="14 15">
    <location>
        <position position="30"/>
    </location>
    <ligand>
        <name>alpha-D-mannopyranose</name>
        <dbReference type="ChEBI" id="CHEBI:28729"/>
    </ligand>
</feature>
<feature type="binding site" evidence="14 15">
    <location>
        <position position="34"/>
    </location>
    <ligand>
        <name>alpha-D-mannopyranose</name>
        <dbReference type="ChEBI" id="CHEBI:28729"/>
    </ligand>
</feature>
<feature type="binding site" evidence="14 15">
    <location>
        <position position="37"/>
    </location>
    <ligand>
        <name>alpha-D-mannopyranose</name>
        <dbReference type="ChEBI" id="CHEBI:28729"/>
    </ligand>
</feature>
<feature type="binding site" evidence="15">
    <location>
        <position position="38"/>
    </location>
    <ligand>
        <name>alpha-D-mannopyranose</name>
        <dbReference type="ChEBI" id="CHEBI:28729"/>
    </ligand>
</feature>
<feature type="binding site" evidence="14">
    <location>
        <position position="41"/>
    </location>
    <ligand>
        <name>alpha-D-mannopyranose</name>
        <dbReference type="ChEBI" id="CHEBI:28729"/>
    </ligand>
</feature>
<feature type="binding site" evidence="14">
    <location>
        <position position="42"/>
    </location>
    <ligand>
        <name>alpha-D-mannopyranose</name>
        <dbReference type="ChEBI" id="CHEBI:28729"/>
    </ligand>
</feature>
<feature type="binding site" evidence="14">
    <location>
        <position position="44"/>
    </location>
    <ligand>
        <name>alpha-D-mannopyranose</name>
        <dbReference type="ChEBI" id="CHEBI:28729"/>
    </ligand>
</feature>
<feature type="binding site" evidence="14 15">
    <location>
        <position position="57"/>
    </location>
    <ligand>
        <name>alpha-D-mannopyranose</name>
        <dbReference type="ChEBI" id="CHEBI:28729"/>
    </ligand>
</feature>
<feature type="binding site" evidence="14 15">
    <location>
        <position position="59"/>
    </location>
    <ligand>
        <name>alpha-D-mannopyranose</name>
        <dbReference type="ChEBI" id="CHEBI:28729"/>
    </ligand>
</feature>
<feature type="binding site" evidence="14 15">
    <location>
        <position position="61"/>
    </location>
    <ligand>
        <name>alpha-D-mannopyranose</name>
        <dbReference type="ChEBI" id="CHEBI:28729"/>
    </ligand>
</feature>
<feature type="binding site" evidence="14 15">
    <location>
        <position position="65"/>
    </location>
    <ligand>
        <name>alpha-D-mannopyranose</name>
        <dbReference type="ChEBI" id="CHEBI:28729"/>
    </ligand>
</feature>
<feature type="binding site" evidence="14 15">
    <location>
        <position position="72"/>
    </location>
    <ligand>
        <name>alpha-D-mannopyranose</name>
        <dbReference type="ChEBI" id="CHEBI:28729"/>
    </ligand>
</feature>
<feature type="binding site" evidence="14">
    <location>
        <position position="73"/>
    </location>
    <ligand>
        <name>alpha-D-mannopyranose</name>
        <dbReference type="ChEBI" id="CHEBI:28729"/>
    </ligand>
</feature>
<feature type="binding site" evidence="14">
    <location>
        <position position="76"/>
    </location>
    <ligand>
        <name>alpha-D-mannopyranose</name>
        <dbReference type="ChEBI" id="CHEBI:28729"/>
    </ligand>
</feature>
<feature type="binding site" evidence="14 15">
    <location>
        <position position="83"/>
    </location>
    <ligand>
        <name>alpha-D-mannopyranose</name>
        <dbReference type="ChEBI" id="CHEBI:28729"/>
    </ligand>
</feature>
<feature type="binding site" evidence="14 15">
    <location>
        <position position="89"/>
    </location>
    <ligand>
        <name>alpha-D-mannopyranose</name>
        <dbReference type="ChEBI" id="CHEBI:28729"/>
    </ligand>
</feature>
<feature type="binding site" evidence="14 15">
    <location>
        <position position="91"/>
    </location>
    <ligand>
        <name>alpha-D-mannopyranose</name>
        <dbReference type="ChEBI" id="CHEBI:28729"/>
    </ligand>
</feature>
<feature type="binding site" evidence="14 15">
    <location>
        <position position="93"/>
    </location>
    <ligand>
        <name>alpha-D-mannopyranose</name>
        <dbReference type="ChEBI" id="CHEBI:28729"/>
    </ligand>
</feature>
<feature type="binding site" evidence="14 15">
    <location>
        <position position="97"/>
    </location>
    <ligand>
        <name>alpha-D-mannopyranose</name>
        <dbReference type="ChEBI" id="CHEBI:28729"/>
    </ligand>
</feature>
<feature type="binding site" evidence="14">
    <location>
        <position position="102"/>
    </location>
    <ligand>
        <name>alpha-D-mannopyranose</name>
        <dbReference type="ChEBI" id="CHEBI:28729"/>
    </ligand>
</feature>
<feature type="disulfide bond" evidence="1 2 8 14 15">
    <location>
        <begin position="29"/>
        <end position="52"/>
    </location>
</feature>
<feature type="strand" evidence="16">
    <location>
        <begin position="3"/>
        <end position="5"/>
    </location>
</feature>
<feature type="strand" evidence="16">
    <location>
        <begin position="8"/>
        <end position="10"/>
    </location>
</feature>
<feature type="strand" evidence="16">
    <location>
        <begin position="15"/>
        <end position="18"/>
    </location>
</feature>
<feature type="strand" evidence="16">
    <location>
        <begin position="21"/>
        <end position="25"/>
    </location>
</feature>
<feature type="strand" evidence="16">
    <location>
        <begin position="31"/>
        <end position="35"/>
    </location>
</feature>
<feature type="strand" evidence="16">
    <location>
        <begin position="38"/>
        <end position="42"/>
    </location>
</feature>
<feature type="strand" evidence="16">
    <location>
        <begin position="48"/>
        <end position="51"/>
    </location>
</feature>
<feature type="strand" evidence="16">
    <location>
        <begin position="53"/>
        <end position="56"/>
    </location>
</feature>
<feature type="strand" evidence="16">
    <location>
        <begin position="62"/>
        <end position="65"/>
    </location>
</feature>
<feature type="strand" evidence="16">
    <location>
        <begin position="71"/>
        <end position="74"/>
    </location>
</feature>
<feature type="strand" evidence="16">
    <location>
        <begin position="80"/>
        <end position="82"/>
    </location>
</feature>
<feature type="strand" evidence="16">
    <location>
        <begin position="84"/>
        <end position="88"/>
    </location>
</feature>
<feature type="strand" evidence="16">
    <location>
        <begin position="94"/>
        <end position="99"/>
    </location>
</feature>
<reference evidence="13" key="1">
    <citation type="journal article" date="1990" name="Arch. Biochem. Biophys.">
        <title>Carbohydrate-binding specificity of the daffodil (Narcissus pseudonarcissus) and amaryllis (Hippeastrum hybr.) bulb lectins.</title>
        <authorList>
            <person name="Kaku H."/>
            <person name="Van Damme E.J."/>
            <person name="Peumans W.J."/>
            <person name="Goldstein I.J."/>
        </authorList>
    </citation>
    <scope>FUNCTION</scope>
    <scope>ACTIVITY REGULATION</scope>
    <scope>TISSUE SPECIFICITY</scope>
</reference>
<reference evidence="13" key="2">
    <citation type="journal article" date="1991" name="Antimicrob. Agents Chemother.">
        <title>Alpha-(1-3)- and alpha-(1-6)-D-mannose-specific plant lectins are markedly inhibitory to human immunodeficiency virus and cytomegalovirus infections in vitro.</title>
        <authorList>
            <person name="Balzarini J."/>
            <person name="Schols D."/>
            <person name="Neyts J."/>
            <person name="Van Damme E."/>
            <person name="Peumans W."/>
            <person name="De Clercq E."/>
        </authorList>
    </citation>
    <scope>FUNCTION</scope>
</reference>
<reference evidence="13" key="3">
    <citation type="journal article" date="1991" name="J. Virol. Methods">
        <title>Human immunodeficiency virus: novel enzyme-linked immunoassays for quantitation of envelope glycoprotein 120.</title>
        <authorList>
            <person name="Weiler B.E."/>
            <person name="Schaecke H."/>
            <person name="Bachmann M."/>
            <person name="Brigido L."/>
            <person name="Gilbert M."/>
            <person name="Mills J."/>
            <person name="Matthes E."/>
            <person name="Forrest J.M."/>
            <person name="Mueller W.E."/>
        </authorList>
    </citation>
    <scope>FUNCTION</scope>
    <scope>BIOTECHNOLOGY</scope>
</reference>
<reference evidence="13" key="4">
    <citation type="journal article" date="1995" name="Res. Virol.">
        <title>Inhibition of herpes simplex, rabies and rubella viruses by lectins with different specificities.</title>
        <authorList>
            <person name="Marchetti M."/>
            <person name="Mastromarino P."/>
            <person name="Rieti S."/>
            <person name="Seganti L."/>
            <person name="Orsi N."/>
        </authorList>
    </citation>
    <scope>FUNCTION</scope>
</reference>
<reference evidence="13" key="5">
    <citation type="journal article" date="2003" name="Cytometry A">
        <title>Early detection of apoptosis by staining of acid-treated apoptotic cells with FITC-labeled lectin from Narcissus pseudonarcissus.</title>
        <authorList>
            <person name="Heyder P."/>
            <person name="Gaipl U.S."/>
            <person name="Beyer T.D."/>
            <person name="Voll R.E."/>
            <person name="Kern P.M."/>
            <person name="Stach C."/>
            <person name="Kalden J.R."/>
            <person name="Herrmann M."/>
        </authorList>
    </citation>
    <scope>FUNCTION</scope>
    <scope>BIOTECHNOLOGY</scope>
</reference>
<reference evidence="14" key="6">
    <citation type="journal article" date="1999" name="J. Mol. Biol.">
        <title>Insights into carbohydrate recognition by Narcissus pseudonarcissus lectin: the crystal structure at 2 A resolution in complex with alpha1-3 mannobiose.</title>
        <authorList>
            <person name="Sauerborn M.K."/>
            <person name="Wright L.M."/>
            <person name="Reynolds C.D."/>
            <person name="Grossmann J.G."/>
            <person name="Rizkallah P.J."/>
        </authorList>
    </citation>
    <scope>X-RAY CRYSTALLOGRAPHY (2.00 ANGSTROMS) IN COMPLEX WITH MANNOSE</scope>
    <scope>FUNCTION</scope>
    <scope>SUBUNIT</scope>
    <scope>SUBCELLULAR LOCATION</scope>
    <scope>TISSUE SPECIFICITY</scope>
    <scope>DISULFIDE BOND</scope>
    <source>
        <tissue evidence="9">Bulb</tissue>
    </source>
</reference>
<reference evidence="15" key="7">
    <citation type="submission" date="2008-07" db="PDB data bank">
        <title>Structure of Narcissus pseudonarcissus lectin complex with Mannobiose at 1.7 A resolution, form II.</title>
        <authorList>
            <person name="Rizkallah P.J."/>
            <person name="Ozbey S."/>
            <person name="Sauerborn M.K."/>
        </authorList>
    </citation>
    <scope>X-RAY CRYSTALLOGRAPHY (1.70 ANGSTROMS) IN COMPLEX WITH MANNOSE</scope>
    <scope>DISULFIDE BOND</scope>
</reference>
<organism evidence="9">
    <name type="scientific">Narcissus pseudonarcissus</name>
    <name type="common">Daffodil</name>
    <dbReference type="NCBI Taxonomy" id="39639"/>
    <lineage>
        <taxon>Eukaryota</taxon>
        <taxon>Viridiplantae</taxon>
        <taxon>Streptophyta</taxon>
        <taxon>Embryophyta</taxon>
        <taxon>Tracheophyta</taxon>
        <taxon>Spermatophyta</taxon>
        <taxon>Magnoliopsida</taxon>
        <taxon>Liliopsida</taxon>
        <taxon>Asparagales</taxon>
        <taxon>Amaryllidaceae</taxon>
        <taxon>Amaryllidoideae</taxon>
        <taxon>Narcissus</taxon>
    </lineage>
</organism>
<name>LEC_NARPS</name>
<accession>C0HM45</accession>
<dbReference type="PDB" id="1NPL">
    <property type="method" value="X-ray"/>
    <property type="resolution" value="2.00 A"/>
    <property type="chains" value="A=1-109"/>
</dbReference>
<dbReference type="PDB" id="3DZW">
    <property type="method" value="X-ray"/>
    <property type="resolution" value="1.70 A"/>
    <property type="chains" value="A/B=1-109"/>
</dbReference>
<dbReference type="PDBsum" id="1NPL"/>
<dbReference type="PDBsum" id="3DZW"/>
<dbReference type="SMR" id="C0HM45"/>
<dbReference type="EvolutionaryTrace" id="C0HM45"/>
<dbReference type="GO" id="GO:0005615">
    <property type="term" value="C:extracellular space"/>
    <property type="evidence" value="ECO:0000314"/>
    <property type="project" value="UniProtKB"/>
</dbReference>
<dbReference type="GO" id="GO:0005537">
    <property type="term" value="F:D-mannose binding"/>
    <property type="evidence" value="ECO:0000314"/>
    <property type="project" value="UniProtKB"/>
</dbReference>
<dbReference type="GO" id="GO:0042803">
    <property type="term" value="F:protein homodimerization activity"/>
    <property type="evidence" value="ECO:0000353"/>
    <property type="project" value="UniProtKB"/>
</dbReference>
<dbReference type="GO" id="GO:0051607">
    <property type="term" value="P:defense response to virus"/>
    <property type="evidence" value="ECO:0000314"/>
    <property type="project" value="UniProtKB"/>
</dbReference>
<dbReference type="GO" id="GO:0050688">
    <property type="term" value="P:regulation of defense response to virus"/>
    <property type="evidence" value="ECO:0007669"/>
    <property type="project" value="UniProtKB-KW"/>
</dbReference>
<dbReference type="GO" id="GO:0009615">
    <property type="term" value="P:response to virus"/>
    <property type="evidence" value="ECO:0000314"/>
    <property type="project" value="UniProtKB"/>
</dbReference>
<dbReference type="CDD" id="cd00028">
    <property type="entry name" value="B_lectin"/>
    <property type="match status" value="1"/>
</dbReference>
<dbReference type="Gene3D" id="2.90.10.10">
    <property type="entry name" value="Bulb-type lectin domain"/>
    <property type="match status" value="1"/>
</dbReference>
<dbReference type="InterPro" id="IPR001480">
    <property type="entry name" value="Bulb-type_lectin_dom"/>
</dbReference>
<dbReference type="InterPro" id="IPR036426">
    <property type="entry name" value="Bulb-type_lectin_dom_sf"/>
</dbReference>
<dbReference type="SMART" id="SM00108">
    <property type="entry name" value="B_lectin"/>
    <property type="match status" value="1"/>
</dbReference>
<dbReference type="SUPFAM" id="SSF51110">
    <property type="entry name" value="alpha-D-mannose-specific plant lectins"/>
    <property type="match status" value="1"/>
</dbReference>
<dbReference type="PROSITE" id="PS50927">
    <property type="entry name" value="BULB_LECTIN"/>
    <property type="match status" value="1"/>
</dbReference>